<organism>
    <name type="scientific">Homo sapiens</name>
    <name type="common">Human</name>
    <dbReference type="NCBI Taxonomy" id="9606"/>
    <lineage>
        <taxon>Eukaryota</taxon>
        <taxon>Metazoa</taxon>
        <taxon>Chordata</taxon>
        <taxon>Craniata</taxon>
        <taxon>Vertebrata</taxon>
        <taxon>Euteleostomi</taxon>
        <taxon>Mammalia</taxon>
        <taxon>Eutheria</taxon>
        <taxon>Euarchontoglires</taxon>
        <taxon>Primates</taxon>
        <taxon>Haplorrhini</taxon>
        <taxon>Catarrhini</taxon>
        <taxon>Hominidae</taxon>
        <taxon>Homo</taxon>
    </lineage>
</organism>
<dbReference type="EC" id="2.7.4.6" evidence="7 10"/>
<dbReference type="EC" id="2.7.13.3" evidence="9"/>
<dbReference type="EMBL" id="X58965">
    <property type="protein sequence ID" value="CAB37870.1"/>
    <property type="molecule type" value="mRNA"/>
</dbReference>
<dbReference type="EMBL" id="M36981">
    <property type="protein sequence ID" value="AAA36369.1"/>
    <property type="molecule type" value="mRNA"/>
</dbReference>
<dbReference type="EMBL" id="L16785">
    <property type="protein sequence ID" value="AAA60228.1"/>
    <property type="molecule type" value="mRNA"/>
</dbReference>
<dbReference type="EMBL" id="DQ109675">
    <property type="protein sequence ID" value="AAZ82097.1"/>
    <property type="molecule type" value="mRNA"/>
</dbReference>
<dbReference type="EMBL" id="AC005839">
    <property type="status" value="NOT_ANNOTATED_CDS"/>
    <property type="molecule type" value="Genomic_DNA"/>
</dbReference>
<dbReference type="EMBL" id="BC002476">
    <property type="protein sequence ID" value="AAH02476.1"/>
    <property type="molecule type" value="mRNA"/>
</dbReference>
<dbReference type="EMBL" id="BC133029">
    <property type="protein sequence ID" value="AAI33030.1"/>
    <property type="molecule type" value="mRNA"/>
</dbReference>
<dbReference type="EMBL" id="BC133031">
    <property type="protein sequence ID" value="AAI33032.1"/>
    <property type="molecule type" value="mRNA"/>
</dbReference>
<dbReference type="EMBL" id="U29200">
    <property type="protein sequence ID" value="AAA86745.1"/>
    <property type="molecule type" value="Genomic_DNA"/>
</dbReference>
<dbReference type="CCDS" id="CCDS11580.1">
    <molecule id="P22392-1"/>
</dbReference>
<dbReference type="PIR" id="A49798">
    <property type="entry name" value="A49798"/>
</dbReference>
<dbReference type="RefSeq" id="NP_001018146.1">
    <molecule id="P22392-2"/>
    <property type="nucleotide sequence ID" value="NM_001018136.2"/>
</dbReference>
<dbReference type="RefSeq" id="NP_001018147.1">
    <molecule id="P22392-1"/>
    <property type="nucleotide sequence ID" value="NM_001018137.3"/>
</dbReference>
<dbReference type="RefSeq" id="NP_001018148.1">
    <molecule id="P22392-1"/>
    <property type="nucleotide sequence ID" value="NM_001018138.1"/>
</dbReference>
<dbReference type="RefSeq" id="NP_001018149.1">
    <molecule id="P22392-1"/>
    <property type="nucleotide sequence ID" value="NM_001018139.2"/>
</dbReference>
<dbReference type="RefSeq" id="NP_002503.1">
    <molecule id="P22392-1"/>
    <property type="nucleotide sequence ID" value="NM_002512.4"/>
</dbReference>
<dbReference type="PDB" id="1NSK">
    <property type="method" value="X-ray"/>
    <property type="resolution" value="2.80 A"/>
    <property type="chains" value="L/N/O/R/T/U=1-152"/>
</dbReference>
<dbReference type="PDB" id="1NUE">
    <property type="method" value="X-ray"/>
    <property type="resolution" value="2.00 A"/>
    <property type="chains" value="A/B/C/D/E/F=2-152"/>
</dbReference>
<dbReference type="PDB" id="3BBB">
    <property type="method" value="X-ray"/>
    <property type="resolution" value="1.30 A"/>
    <property type="chains" value="A/B/C/D/E/F=2-152"/>
</dbReference>
<dbReference type="PDB" id="3BBC">
    <property type="method" value="X-ray"/>
    <property type="resolution" value="1.70 A"/>
    <property type="chains" value="A/B/C/D/E/F=2-152"/>
</dbReference>
<dbReference type="PDB" id="3BBF">
    <property type="method" value="X-ray"/>
    <property type="resolution" value="1.70 A"/>
    <property type="chains" value="A/B/C/D/E/F=2-152"/>
</dbReference>
<dbReference type="PDB" id="7KPF">
    <property type="method" value="X-ray"/>
    <property type="resolution" value="2.23 A"/>
    <property type="chains" value="A/B/C/D/E/F=1-152"/>
</dbReference>
<dbReference type="PDB" id="8PIE">
    <property type="method" value="X-ray"/>
    <property type="resolution" value="1.90 A"/>
    <property type="chains" value="A/B/C/D/E/F=2-152"/>
</dbReference>
<dbReference type="PDB" id="8PYW">
    <property type="method" value="X-ray"/>
    <property type="resolution" value="1.55 A"/>
    <property type="chains" value="A/B/C/D/E/F=2-152"/>
</dbReference>
<dbReference type="PDBsum" id="1NSK"/>
<dbReference type="PDBsum" id="1NUE"/>
<dbReference type="PDBsum" id="3BBB"/>
<dbReference type="PDBsum" id="3BBC"/>
<dbReference type="PDBsum" id="3BBF"/>
<dbReference type="PDBsum" id="7KPF"/>
<dbReference type="PDBsum" id="8PIE"/>
<dbReference type="PDBsum" id="8PYW"/>
<dbReference type="SMR" id="P22392"/>
<dbReference type="BioGRID" id="110895">
    <property type="interactions" value="205"/>
</dbReference>
<dbReference type="BioGRID" id="576341">
    <property type="interactions" value="95"/>
</dbReference>
<dbReference type="DIP" id="DIP-50179N"/>
<dbReference type="FunCoup" id="P22392">
    <property type="interactions" value="1873"/>
</dbReference>
<dbReference type="IntAct" id="P22392">
    <property type="interactions" value="92"/>
</dbReference>
<dbReference type="MINT" id="P22392"/>
<dbReference type="STRING" id="9606.ENSP00000376886"/>
<dbReference type="BindingDB" id="P22392"/>
<dbReference type="ChEMBL" id="CHEMBL2160"/>
<dbReference type="DrugBank" id="DB00787">
    <property type="generic name" value="Acyclovir"/>
</dbReference>
<dbReference type="DrugBank" id="DB00718">
    <property type="generic name" value="Adefovir dipivoxil"/>
</dbReference>
<dbReference type="DrugBank" id="DB00640">
    <property type="generic name" value="Adenosine"/>
</dbReference>
<dbReference type="DrugBank" id="DB01262">
    <property type="generic name" value="Decitabine"/>
</dbReference>
<dbReference type="DrugBank" id="DB04315">
    <property type="generic name" value="Guanosine-5'-Diphosphate"/>
</dbReference>
<dbReference type="DrugBank" id="DB00709">
    <property type="generic name" value="Lamivudine"/>
</dbReference>
<dbReference type="DrugBank" id="DB14126">
    <property type="generic name" value="Tenofovir"/>
</dbReference>
<dbReference type="DrugBank" id="DB09299">
    <property type="generic name" value="Tenofovir alafenamide"/>
</dbReference>
<dbReference type="DrugBank" id="DB00300">
    <property type="generic name" value="Tenofovir disoproxil"/>
</dbReference>
<dbReference type="GlyGen" id="P22392">
    <property type="glycosylation" value="1 site, 1 O-linked glycan (1 site)"/>
</dbReference>
<dbReference type="iPTMnet" id="P22392"/>
<dbReference type="MetOSite" id="P22392"/>
<dbReference type="PhosphoSitePlus" id="P22392"/>
<dbReference type="SwissPalm" id="P22392"/>
<dbReference type="BioMuta" id="NME2"/>
<dbReference type="DMDM" id="127983"/>
<dbReference type="OGP" id="P22392"/>
<dbReference type="jPOST" id="P22392"/>
<dbReference type="MassIVE" id="P22392"/>
<dbReference type="PaxDb" id="9606-ENSP00000376886"/>
<dbReference type="PeptideAtlas" id="P22392"/>
<dbReference type="PRIDE" id="P22392"/>
<dbReference type="ProteomicsDB" id="53986">
    <molecule id="P22392-1"/>
</dbReference>
<dbReference type="ProteomicsDB" id="53987">
    <molecule id="P22392-2"/>
</dbReference>
<dbReference type="Pumba" id="P22392"/>
<dbReference type="TopDownProteomics" id="P22392-1">
    <molecule id="P22392-1"/>
</dbReference>
<dbReference type="TopDownProteomics" id="P22392-2">
    <molecule id="P22392-2"/>
</dbReference>
<dbReference type="Antibodypedia" id="35045">
    <property type="antibodies" value="411 antibodies from 25 providers"/>
</dbReference>
<dbReference type="CPTC" id="P22392">
    <property type="antibodies" value="3 antibodies"/>
</dbReference>
<dbReference type="DNASU" id="4831"/>
<dbReference type="Ensembl" id="ENST00000393190.4">
    <molecule id="P22392-1"/>
    <property type="protein sequence ID" value="ENSP00000376886.1"/>
    <property type="gene ID" value="ENSG00000243678.12"/>
</dbReference>
<dbReference type="Ensembl" id="ENST00000503064.5">
    <molecule id="P22392-1"/>
    <property type="protein sequence ID" value="ENSP00000426901.1"/>
    <property type="gene ID" value="ENSG00000243678.12"/>
</dbReference>
<dbReference type="Ensembl" id="ENST00000512737.6">
    <molecule id="P22392-1"/>
    <property type="protein sequence ID" value="ENSP00000421064.1"/>
    <property type="gene ID" value="ENSG00000243678.12"/>
</dbReference>
<dbReference type="Ensembl" id="ENST00000513177.5">
    <molecule id="P22392-1"/>
    <property type="protein sequence ID" value="ENSP00000425581.1"/>
    <property type="gene ID" value="ENSG00000243678.12"/>
</dbReference>
<dbReference type="Ensembl" id="ENST00000514264.6">
    <molecule id="P22392-1"/>
    <property type="protein sequence ID" value="ENSP00000426976.2"/>
    <property type="gene ID" value="ENSG00000243678.12"/>
</dbReference>
<dbReference type="GeneID" id="4831"/>
<dbReference type="KEGG" id="hsa:4831"/>
<dbReference type="KEGG" id="hsa:654364"/>
<dbReference type="MANE-Select" id="ENST00000512737.6">
    <property type="protein sequence ID" value="ENSP00000421064.1"/>
    <property type="RefSeq nucleotide sequence ID" value="NM_002512.4"/>
    <property type="RefSeq protein sequence ID" value="NP_002503.1"/>
</dbReference>
<dbReference type="UCSC" id="uc002itj.4">
    <molecule id="P22392-1"/>
    <property type="organism name" value="human"/>
</dbReference>
<dbReference type="AGR" id="HGNC:33531"/>
<dbReference type="AGR" id="HGNC:7850"/>
<dbReference type="CTD" id="4831"/>
<dbReference type="CTD" id="654364"/>
<dbReference type="DisGeNET" id="4831"/>
<dbReference type="DisGeNET" id="654364"/>
<dbReference type="GeneCards" id="NME2"/>
<dbReference type="HGNC" id="HGNC:7850">
    <property type="gene designation" value="NME2"/>
</dbReference>
<dbReference type="HPA" id="ENSG00000243678">
    <property type="expression patterns" value="Low tissue specificity"/>
</dbReference>
<dbReference type="MIM" id="156491">
    <property type="type" value="gene"/>
</dbReference>
<dbReference type="neXtProt" id="NX_P22392"/>
<dbReference type="OpenTargets" id="ENSG00000011052"/>
<dbReference type="OpenTargets" id="ENSG00000243678"/>
<dbReference type="PharmGKB" id="PA162398077"/>
<dbReference type="VEuPathDB" id="HostDB:ENSG00000243678"/>
<dbReference type="eggNOG" id="KOG0888">
    <property type="taxonomic scope" value="Eukaryota"/>
</dbReference>
<dbReference type="GeneTree" id="ENSGT00940000161569"/>
<dbReference type="HOGENOM" id="CLU_080881_1_0_1"/>
<dbReference type="InParanoid" id="P22392"/>
<dbReference type="OMA" id="GDFCIDL"/>
<dbReference type="OrthoDB" id="2162449at2759"/>
<dbReference type="PAN-GO" id="P22392">
    <property type="GO annotations" value="2 GO annotations based on evolutionary models"/>
</dbReference>
<dbReference type="PhylomeDB" id="P22392"/>
<dbReference type="TreeFam" id="TF106373"/>
<dbReference type="BioCyc" id="MetaCyc:HS04463-MONOMER"/>
<dbReference type="BRENDA" id="2.7.4.6">
    <property type="organism ID" value="2681"/>
</dbReference>
<dbReference type="PathwayCommons" id="P22392"/>
<dbReference type="Reactome" id="R-HSA-499943">
    <property type="pathway name" value="Interconversion of nucleotide di- and triphosphates"/>
</dbReference>
<dbReference type="Reactome" id="R-HSA-6798695">
    <property type="pathway name" value="Neutrophil degranulation"/>
</dbReference>
<dbReference type="Reactome" id="R-HSA-9748787">
    <property type="pathway name" value="Azathioprine ADME"/>
</dbReference>
<dbReference type="Reactome" id="R-HSA-9755088">
    <property type="pathway name" value="Ribavirin ADME"/>
</dbReference>
<dbReference type="SignaLink" id="P22392"/>
<dbReference type="SIGNOR" id="P22392"/>
<dbReference type="BioGRID-ORCS" id="4831">
    <property type="hits" value="39 hits in 1156 CRISPR screens"/>
</dbReference>
<dbReference type="BioGRID-ORCS" id="654364">
    <property type="hits" value="20 hits in 1029 CRISPR screens"/>
</dbReference>
<dbReference type="CD-CODE" id="91857CE7">
    <property type="entry name" value="Nucleolus"/>
</dbReference>
<dbReference type="EvolutionaryTrace" id="P22392"/>
<dbReference type="GeneWiki" id="NME1-NME2"/>
<dbReference type="GeneWiki" id="NME2"/>
<dbReference type="Pharos" id="P22392">
    <property type="development level" value="Tbio"/>
</dbReference>
<dbReference type="PRO" id="PR:P22392"/>
<dbReference type="Proteomes" id="UP000005640">
    <property type="component" value="Chromosome 17"/>
</dbReference>
<dbReference type="RNAct" id="P22392">
    <property type="molecule type" value="protein"/>
</dbReference>
<dbReference type="Bgee" id="ENSG00000243678">
    <property type="expression patterns" value="Expressed in left ovary and 96 other cell types or tissues"/>
</dbReference>
<dbReference type="ExpressionAtlas" id="P22392">
    <property type="expression patterns" value="baseline and differential"/>
</dbReference>
<dbReference type="GO" id="GO:0071944">
    <property type="term" value="C:cell periphery"/>
    <property type="evidence" value="ECO:0000314"/>
    <property type="project" value="UniProtKB"/>
</dbReference>
<dbReference type="GO" id="GO:0005737">
    <property type="term" value="C:cytoplasm"/>
    <property type="evidence" value="ECO:0000314"/>
    <property type="project" value="UniProtKB"/>
</dbReference>
<dbReference type="GO" id="GO:0005829">
    <property type="term" value="C:cytosol"/>
    <property type="evidence" value="ECO:0000304"/>
    <property type="project" value="Reactome"/>
</dbReference>
<dbReference type="GO" id="GO:0070062">
    <property type="term" value="C:extracellular exosome"/>
    <property type="evidence" value="ECO:0007005"/>
    <property type="project" value="UniProtKB"/>
</dbReference>
<dbReference type="GO" id="GO:0005576">
    <property type="term" value="C:extracellular region"/>
    <property type="evidence" value="ECO:0000304"/>
    <property type="project" value="Reactome"/>
</dbReference>
<dbReference type="GO" id="GO:1904813">
    <property type="term" value="C:ficolin-1-rich granule lumen"/>
    <property type="evidence" value="ECO:0000304"/>
    <property type="project" value="Reactome"/>
</dbReference>
<dbReference type="GO" id="GO:0030027">
    <property type="term" value="C:lamellipodium"/>
    <property type="evidence" value="ECO:0000314"/>
    <property type="project" value="HGNC-UCL"/>
</dbReference>
<dbReference type="GO" id="GO:0005634">
    <property type="term" value="C:nucleus"/>
    <property type="evidence" value="ECO:0007005"/>
    <property type="project" value="UniProtKB"/>
</dbReference>
<dbReference type="GO" id="GO:0048471">
    <property type="term" value="C:perinuclear region of cytoplasm"/>
    <property type="evidence" value="ECO:0007669"/>
    <property type="project" value="UniProtKB-SubCell"/>
</dbReference>
<dbReference type="GO" id="GO:0001726">
    <property type="term" value="C:ruffle"/>
    <property type="evidence" value="ECO:0000314"/>
    <property type="project" value="HGNC-UCL"/>
</dbReference>
<dbReference type="GO" id="GO:0034774">
    <property type="term" value="C:secretory granule lumen"/>
    <property type="evidence" value="ECO:0000304"/>
    <property type="project" value="Reactome"/>
</dbReference>
<dbReference type="GO" id="GO:0005524">
    <property type="term" value="F:ATP binding"/>
    <property type="evidence" value="ECO:0007669"/>
    <property type="project" value="UniProtKB-KW"/>
</dbReference>
<dbReference type="GO" id="GO:0003677">
    <property type="term" value="F:DNA binding"/>
    <property type="evidence" value="ECO:0000314"/>
    <property type="project" value="UniProtKB"/>
</dbReference>
<dbReference type="GO" id="GO:0051880">
    <property type="term" value="F:G-quadruplex DNA binding"/>
    <property type="evidence" value="ECO:0000314"/>
    <property type="project" value="UniProtKB"/>
</dbReference>
<dbReference type="GO" id="GO:0019003">
    <property type="term" value="F:GDP binding"/>
    <property type="evidence" value="ECO:0000315"/>
    <property type="project" value="UniProtKB"/>
</dbReference>
<dbReference type="GO" id="GO:0042802">
    <property type="term" value="F:identical protein binding"/>
    <property type="evidence" value="ECO:0000353"/>
    <property type="project" value="IntAct"/>
</dbReference>
<dbReference type="GO" id="GO:0046872">
    <property type="term" value="F:metal ion binding"/>
    <property type="evidence" value="ECO:0007669"/>
    <property type="project" value="UniProtKB-KW"/>
</dbReference>
<dbReference type="GO" id="GO:0004550">
    <property type="term" value="F:nucleoside diphosphate kinase activity"/>
    <property type="evidence" value="ECO:0000314"/>
    <property type="project" value="UniProtKB"/>
</dbReference>
<dbReference type="GO" id="GO:0004673">
    <property type="term" value="F:protein histidine kinase activity"/>
    <property type="evidence" value="ECO:0007669"/>
    <property type="project" value="UniProtKB-EC"/>
</dbReference>
<dbReference type="GO" id="GO:0003713">
    <property type="term" value="F:transcription coactivator activity"/>
    <property type="evidence" value="ECO:0000314"/>
    <property type="project" value="UniProtKB"/>
</dbReference>
<dbReference type="GO" id="GO:0007155">
    <property type="term" value="P:cell adhesion"/>
    <property type="evidence" value="ECO:0000304"/>
    <property type="project" value="HGNC-UCL"/>
</dbReference>
<dbReference type="GO" id="GO:0006241">
    <property type="term" value="P:CTP biosynthetic process"/>
    <property type="evidence" value="ECO:0007669"/>
    <property type="project" value="InterPro"/>
</dbReference>
<dbReference type="GO" id="GO:0006183">
    <property type="term" value="P:GTP biosynthetic process"/>
    <property type="evidence" value="ECO:0007669"/>
    <property type="project" value="InterPro"/>
</dbReference>
<dbReference type="GO" id="GO:0007229">
    <property type="term" value="P:integrin-mediated signaling pathway"/>
    <property type="evidence" value="ECO:0000314"/>
    <property type="project" value="UniProtKB"/>
</dbReference>
<dbReference type="GO" id="GO:0043066">
    <property type="term" value="P:negative regulation of apoptotic process"/>
    <property type="evidence" value="ECO:0000315"/>
    <property type="project" value="HGNC-UCL"/>
</dbReference>
<dbReference type="GO" id="GO:0009142">
    <property type="term" value="P:nucleoside triphosphate biosynthetic process"/>
    <property type="evidence" value="ECO:0000314"/>
    <property type="project" value="UniProtKB"/>
</dbReference>
<dbReference type="GO" id="GO:0045893">
    <property type="term" value="P:positive regulation of DNA-templated transcription"/>
    <property type="evidence" value="ECO:0000314"/>
    <property type="project" value="UniProtKB"/>
</dbReference>
<dbReference type="GO" id="GO:0050679">
    <property type="term" value="P:positive regulation of epithelial cell proliferation"/>
    <property type="evidence" value="ECO:0000315"/>
    <property type="project" value="HGNC-UCL"/>
</dbReference>
<dbReference type="GO" id="GO:0045618">
    <property type="term" value="P:positive regulation of keratinocyte differentiation"/>
    <property type="evidence" value="ECO:0000315"/>
    <property type="project" value="HGNC-UCL"/>
</dbReference>
<dbReference type="GO" id="GO:0045944">
    <property type="term" value="P:positive regulation of transcription by RNA polymerase II"/>
    <property type="evidence" value="ECO:0000314"/>
    <property type="project" value="UniProtKB"/>
</dbReference>
<dbReference type="GO" id="GO:0042981">
    <property type="term" value="P:regulation of apoptotic process"/>
    <property type="evidence" value="ECO:0000318"/>
    <property type="project" value="GO_Central"/>
</dbReference>
<dbReference type="GO" id="GO:0045682">
    <property type="term" value="P:regulation of epidermis development"/>
    <property type="evidence" value="ECO:0000315"/>
    <property type="project" value="HGNC-UCL"/>
</dbReference>
<dbReference type="GO" id="GO:0006228">
    <property type="term" value="P:UTP biosynthetic process"/>
    <property type="evidence" value="ECO:0007669"/>
    <property type="project" value="InterPro"/>
</dbReference>
<dbReference type="CDD" id="cd04413">
    <property type="entry name" value="NDPk_I"/>
    <property type="match status" value="1"/>
</dbReference>
<dbReference type="FunFam" id="3.30.70.141:FF:000015">
    <property type="entry name" value="Nucleoside diphosphate kinase B"/>
    <property type="match status" value="1"/>
</dbReference>
<dbReference type="Gene3D" id="3.30.70.141">
    <property type="entry name" value="Nucleoside diphosphate kinase-like domain"/>
    <property type="match status" value="1"/>
</dbReference>
<dbReference type="HAMAP" id="MF_00451">
    <property type="entry name" value="NDP_kinase"/>
    <property type="match status" value="1"/>
</dbReference>
<dbReference type="InterPro" id="IPR034907">
    <property type="entry name" value="NDK-like_dom"/>
</dbReference>
<dbReference type="InterPro" id="IPR036850">
    <property type="entry name" value="NDK-like_dom_sf"/>
</dbReference>
<dbReference type="InterPro" id="IPR001564">
    <property type="entry name" value="Nucleoside_diP_kinase"/>
</dbReference>
<dbReference type="InterPro" id="IPR023005">
    <property type="entry name" value="Nucleoside_diP_kinase_AS"/>
</dbReference>
<dbReference type="NCBIfam" id="NF001908">
    <property type="entry name" value="PRK00668.1"/>
    <property type="match status" value="1"/>
</dbReference>
<dbReference type="PANTHER" id="PTHR11349">
    <property type="entry name" value="NUCLEOSIDE DIPHOSPHATE KINASE"/>
    <property type="match status" value="1"/>
</dbReference>
<dbReference type="Pfam" id="PF00334">
    <property type="entry name" value="NDK"/>
    <property type="match status" value="1"/>
</dbReference>
<dbReference type="PRINTS" id="PR01243">
    <property type="entry name" value="NUCDPKINASE"/>
</dbReference>
<dbReference type="SMART" id="SM00562">
    <property type="entry name" value="NDK"/>
    <property type="match status" value="1"/>
</dbReference>
<dbReference type="SUPFAM" id="SSF54919">
    <property type="entry name" value="Nucleoside diphosphate kinase, NDK"/>
    <property type="match status" value="1"/>
</dbReference>
<dbReference type="PROSITE" id="PS00469">
    <property type="entry name" value="NDPK"/>
    <property type="match status" value="1"/>
</dbReference>
<dbReference type="PROSITE" id="PS51374">
    <property type="entry name" value="NDPK_LIKE"/>
    <property type="match status" value="1"/>
</dbReference>
<gene>
    <name type="primary">NME2</name>
    <name type="synonym">NM23B</name>
</gene>
<name>NDKB_HUMAN</name>
<feature type="chain" id="PRO_0000137117" description="Nucleoside diphosphate kinase B">
    <location>
        <begin position="1"/>
        <end position="152"/>
    </location>
</feature>
<feature type="region of interest" description="Interaction with AKAP13" evidence="4">
    <location>
        <begin position="1"/>
        <end position="66"/>
    </location>
</feature>
<feature type="active site" description="Pros-phosphohistidine intermediate" evidence="7">
    <location>
        <position position="118"/>
    </location>
</feature>
<feature type="binding site" evidence="8 17">
    <location>
        <position position="12"/>
    </location>
    <ligand>
        <name>ATP</name>
        <dbReference type="ChEBI" id="CHEBI:30616"/>
    </ligand>
</feature>
<feature type="binding site" evidence="8 17">
    <location>
        <position position="60"/>
    </location>
    <ligand>
        <name>ATP</name>
        <dbReference type="ChEBI" id="CHEBI:30616"/>
    </ligand>
</feature>
<feature type="binding site" evidence="8 17">
    <location>
        <position position="88"/>
    </location>
    <ligand>
        <name>ATP</name>
        <dbReference type="ChEBI" id="CHEBI:30616"/>
    </ligand>
</feature>
<feature type="binding site" evidence="8 17">
    <location>
        <position position="94"/>
    </location>
    <ligand>
        <name>ATP</name>
        <dbReference type="ChEBI" id="CHEBI:30616"/>
    </ligand>
</feature>
<feature type="binding site" evidence="8 17">
    <location>
        <position position="105"/>
    </location>
    <ligand>
        <name>ATP</name>
        <dbReference type="ChEBI" id="CHEBI:30616"/>
    </ligand>
</feature>
<feature type="binding site" evidence="8 17">
    <location>
        <position position="115"/>
    </location>
    <ligand>
        <name>ATP</name>
        <dbReference type="ChEBI" id="CHEBI:30616"/>
    </ligand>
</feature>
<feature type="splice variant" id="VSP_036708" description="In isoform 3." evidence="12 13">
    <original>M</original>
    <variation>MANCERTFIAIKPDGVQRGLVGEIIKRFEQKGFRLVGLKFMQASEDLLKEHYVDLKDRPFFAGLVKYMHSGPVVAMVWEGLNVVKTGRVMLGETNPADSKPGTIRGDFCIQVGRTM</variation>
    <location>
        <position position="1"/>
    </location>
</feature>
<feature type="mutagenesis site" description="Decreased single-stranded DNA-binding and nucleotide-binding activity. No effect on 3D-structure." evidence="8">
    <original>R</original>
    <variation>A</variation>
    <location>
        <position position="88"/>
    </location>
</feature>
<feature type="helix" evidence="20">
    <location>
        <begin position="2"/>
        <end position="4"/>
    </location>
</feature>
<feature type="strand" evidence="18">
    <location>
        <begin position="6"/>
        <end position="11"/>
    </location>
</feature>
<feature type="helix" evidence="18">
    <location>
        <begin position="13"/>
        <end position="17"/>
    </location>
</feature>
<feature type="helix" evidence="18">
    <location>
        <begin position="21"/>
        <end position="31"/>
    </location>
</feature>
<feature type="strand" evidence="18">
    <location>
        <begin position="34"/>
        <end position="41"/>
    </location>
</feature>
<feature type="helix" evidence="18">
    <location>
        <begin position="45"/>
        <end position="51"/>
    </location>
</feature>
<feature type="helix" evidence="18">
    <location>
        <begin position="53"/>
        <end position="55"/>
    </location>
</feature>
<feature type="helix" evidence="18">
    <location>
        <begin position="61"/>
        <end position="68"/>
    </location>
</feature>
<feature type="strand" evidence="18">
    <location>
        <begin position="73"/>
        <end position="80"/>
    </location>
</feature>
<feature type="helix" evidence="18">
    <location>
        <begin position="83"/>
        <end position="91"/>
    </location>
</feature>
<feature type="helix" evidence="18">
    <location>
        <begin position="96"/>
        <end position="98"/>
    </location>
</feature>
<feature type="helix" evidence="18">
    <location>
        <begin position="104"/>
        <end position="108"/>
    </location>
</feature>
<feature type="helix" evidence="19">
    <location>
        <begin position="112"/>
        <end position="114"/>
    </location>
</feature>
<feature type="strand" evidence="18">
    <location>
        <begin position="117"/>
        <end position="119"/>
    </location>
</feature>
<feature type="helix" evidence="18">
    <location>
        <begin position="123"/>
        <end position="133"/>
    </location>
</feature>
<feature type="helix" evidence="18">
    <location>
        <begin position="136"/>
        <end position="138"/>
    </location>
</feature>
<feature type="helix" evidence="18">
    <location>
        <begin position="147"/>
        <end position="150"/>
    </location>
</feature>
<sequence length="152" mass="17298">MANLERTFIAIKPDGVQRGLVGEIIKRFEQKGFRLVAMKFLRASEEHLKQHYIDLKDRPFFPGLVKYMNSGPVVAMVWEGLNVVKTGRVMLGETNPADSKPGTIRGDFCIQVGRNIIHGSDSVKSAEKEISLWFKPEELVDYKSCAHDWVYE</sequence>
<keyword id="KW-0002">3D-structure</keyword>
<keyword id="KW-0010">Activator</keyword>
<keyword id="KW-0025">Alternative splicing</keyword>
<keyword id="KW-0067">ATP-binding</keyword>
<keyword id="KW-0966">Cell projection</keyword>
<keyword id="KW-0963">Cytoplasm</keyword>
<keyword id="KW-0903">Direct protein sequencing</keyword>
<keyword id="KW-0238">DNA-binding</keyword>
<keyword id="KW-0418">Kinase</keyword>
<keyword id="KW-0460">Magnesium</keyword>
<keyword id="KW-0479">Metal-binding</keyword>
<keyword id="KW-0546">Nucleotide metabolism</keyword>
<keyword id="KW-0547">Nucleotide-binding</keyword>
<keyword id="KW-0539">Nucleus</keyword>
<keyword id="KW-1267">Proteomics identification</keyword>
<keyword id="KW-1185">Reference proteome</keyword>
<keyword id="KW-0804">Transcription</keyword>
<keyword id="KW-0805">Transcription regulation</keyword>
<keyword id="KW-0808">Transferase</keyword>
<evidence type="ECO:0000250" key="1">
    <source>
        <dbReference type="UniProtKB" id="P36010"/>
    </source>
</evidence>
<evidence type="ECO:0000250" key="2">
    <source>
        <dbReference type="UniProtKB" id="Q01768"/>
    </source>
</evidence>
<evidence type="ECO:0000269" key="3">
    <source>
    </source>
</evidence>
<evidence type="ECO:0000269" key="4">
    <source>
    </source>
</evidence>
<evidence type="ECO:0000269" key="5">
    <source>
    </source>
</evidence>
<evidence type="ECO:0000269" key="6">
    <source>
    </source>
</evidence>
<evidence type="ECO:0000269" key="7">
    <source>
    </source>
</evidence>
<evidence type="ECO:0000269" key="8">
    <source>
    </source>
</evidence>
<evidence type="ECO:0000269" key="9">
    <source>
    </source>
</evidence>
<evidence type="ECO:0000269" key="10">
    <source>
    </source>
</evidence>
<evidence type="ECO:0000269" key="11">
    <source>
    </source>
</evidence>
<evidence type="ECO:0000303" key="12">
    <source>
    </source>
</evidence>
<evidence type="ECO:0000303" key="13">
    <source>
    </source>
</evidence>
<evidence type="ECO:0000305" key="14"/>
<evidence type="ECO:0007744" key="15">
    <source>
        <dbReference type="PDB" id="3BBB"/>
    </source>
</evidence>
<evidence type="ECO:0007744" key="16">
    <source>
        <dbReference type="PDB" id="3BBC"/>
    </source>
</evidence>
<evidence type="ECO:0007744" key="17">
    <source>
        <dbReference type="PDB" id="3BBF"/>
    </source>
</evidence>
<evidence type="ECO:0007829" key="18">
    <source>
        <dbReference type="PDB" id="3BBB"/>
    </source>
</evidence>
<evidence type="ECO:0007829" key="19">
    <source>
        <dbReference type="PDB" id="3BBC"/>
    </source>
</evidence>
<evidence type="ECO:0007829" key="20">
    <source>
        <dbReference type="PDB" id="8PYW"/>
    </source>
</evidence>
<proteinExistence type="evidence at protein level"/>
<comment type="function">
    <text evidence="1 4 8 9 10 11">Major role in the synthesis of nucleoside triphosphates other than ATP. The ATP gamma phosphate is transferred to the NDP beta phosphate via a ping-pong mechanism, using a phosphorylated active-site intermediate (By similarity). Negatively regulates Rho activity by interacting with AKAP13/LBC (PubMed:15249197). Acts as a transcriptional activator of the MYC gene; binds DNA non-specifically (PubMed:19435876, PubMed:8392752). Binds to both single-stranded guanine- and cytosine-rich strands within the nuclease hypersensitive element (NHE) III(1) region of the MYC gene promoter. Does not bind to duplex NHE III(1) (PubMed:19435876). Has G-quadruplex (G4) DNA-binding activity, which is independent of its nucleotide-binding and kinase activity. Binds both folded and unfolded G4 with similar low nanomolar affinities. Stabilizes folded G4s regardless of whether they are prefolded or not (PubMed:25679041). Exhibits histidine protein kinase activity (PubMed:20946858).</text>
</comment>
<comment type="catalytic activity">
    <reaction evidence="7 10">
        <text>a 2'-deoxyribonucleoside 5'-diphosphate + ATP = a 2'-deoxyribonucleoside 5'-triphosphate + ADP</text>
        <dbReference type="Rhea" id="RHEA:44640"/>
        <dbReference type="ChEBI" id="CHEBI:30616"/>
        <dbReference type="ChEBI" id="CHEBI:61560"/>
        <dbReference type="ChEBI" id="CHEBI:73316"/>
        <dbReference type="ChEBI" id="CHEBI:456216"/>
        <dbReference type="EC" id="2.7.4.6"/>
    </reaction>
</comment>
<comment type="catalytic activity">
    <reaction evidence="7 10">
        <text>a ribonucleoside 5'-diphosphate + ATP = a ribonucleoside 5'-triphosphate + ADP</text>
        <dbReference type="Rhea" id="RHEA:18113"/>
        <dbReference type="ChEBI" id="CHEBI:30616"/>
        <dbReference type="ChEBI" id="CHEBI:57930"/>
        <dbReference type="ChEBI" id="CHEBI:61557"/>
        <dbReference type="ChEBI" id="CHEBI:456216"/>
        <dbReference type="EC" id="2.7.4.6"/>
    </reaction>
</comment>
<comment type="catalytic activity">
    <reaction evidence="9">
        <text>ATP + protein L-histidine = ADP + protein N-phospho-L-histidine.</text>
        <dbReference type="EC" id="2.7.13.3"/>
    </reaction>
</comment>
<comment type="cofactor">
    <cofactor evidence="8">
        <name>Mg(2+)</name>
        <dbReference type="ChEBI" id="CHEBI:18420"/>
    </cofactor>
</comment>
<comment type="subunit">
    <text evidence="2 3 4 6 7">Hexamer of two different chains: A and B (A6, A5B, A4B2, A3B3, A2B4, AB5, B6) (PubMed:1851158). Interacts with CAPN8 (By similarity). Interacts with AKAP13 (PubMed:15249197). Interacts with ITGB1BP1 (via C-terminal domain region) (PubMed:11919189). Interacts with BCL2L10 (PubMed:17532299).</text>
</comment>
<comment type="interaction">
    <interactant intactId="EBI-713693">
        <id>P22392</id>
    </interactant>
    <interactant intactId="EBI-346547">
        <id>P50570</id>
        <label>DNM2</label>
    </interactant>
    <organismsDiffer>false</organismsDiffer>
    <experiments>2</experiments>
</comment>
<comment type="interaction">
    <interactant intactId="EBI-713693">
        <id>P22392</id>
    </interactant>
    <interactant intactId="EBI-2127367">
        <id>O14713-1</id>
        <label>ITGB1BP1</label>
    </interactant>
    <organismsDiffer>false</organismsDiffer>
    <experiments>7</experiments>
</comment>
<comment type="interaction">
    <interactant intactId="EBI-713693">
        <id>P22392</id>
    </interactant>
    <interactant intactId="EBI-741141">
        <id>P15531</id>
        <label>NME1</label>
    </interactant>
    <organismsDiffer>false</organismsDiffer>
    <experiments>7</experiments>
</comment>
<comment type="interaction">
    <interactant intactId="EBI-713693">
        <id>P22392</id>
    </interactant>
    <interactant intactId="EBI-713693">
        <id>P22392</id>
        <label>NME2</label>
    </interactant>
    <organismsDiffer>false</organismsDiffer>
    <experiments>3</experiments>
</comment>
<comment type="interaction">
    <interactant intactId="EBI-713693">
        <id>P22392</id>
    </interactant>
    <interactant intactId="EBI-713684">
        <id>Q13232</id>
        <label>NME3</label>
    </interactant>
    <organismsDiffer>false</organismsDiffer>
    <experiments>4</experiments>
</comment>
<comment type="interaction">
    <interactant intactId="EBI-713693">
        <id>P22392</id>
    </interactant>
    <interactant intactId="EBI-744871">
        <id>O00746</id>
        <label>NME4</label>
    </interactant>
    <organismsDiffer>false</organismsDiffer>
    <experiments>6</experiments>
</comment>
<comment type="subcellular location">
    <subcellularLocation>
        <location evidence="6">Cytoplasm</location>
    </subcellularLocation>
    <subcellularLocation>
        <location evidence="3">Cell projection</location>
        <location evidence="3">Lamellipodium</location>
    </subcellularLocation>
    <subcellularLocation>
        <location evidence="3">Cell projection</location>
        <location evidence="3">Ruffle</location>
    </subcellularLocation>
    <text evidence="3">Colocalizes with ITGB1 and ITGB1BP1 at the edge or peripheral ruffles and lamellipodia during the early stages of cell spreading on fibronectin or collagen but not on vitronectin or laminin substrates.</text>
</comment>
<comment type="subcellular location">
    <molecule>Isoform 1</molecule>
    <subcellularLocation>
        <location evidence="5">Cytoplasm</location>
    </subcellularLocation>
    <subcellularLocation>
        <location evidence="5">Cytoplasm</location>
        <location evidence="5">Perinuclear region</location>
    </subcellularLocation>
    <subcellularLocation>
        <location evidence="5">Nucleus</location>
    </subcellularLocation>
</comment>
<comment type="subcellular location">
    <molecule>Isoform 3</molecule>
    <subcellularLocation>
        <location evidence="5">Cytoplasm</location>
    </subcellularLocation>
    <subcellularLocation>
        <location evidence="5">Cytoplasm</location>
        <location evidence="5">Perinuclear region</location>
    </subcellularLocation>
    <subcellularLocation>
        <location evidence="5">Nucleus</location>
    </subcellularLocation>
</comment>
<comment type="alternative products">
    <event type="alternative splicing"/>
    <isoform>
        <id>P22392-1</id>
        <name>1</name>
        <name>NM23-H2</name>
        <sequence type="displayed"/>
    </isoform>
    <isoform>
        <id>P22392-2</id>
        <name>3</name>
        <name>NM23-LV</name>
        <sequence type="described" ref="VSP_036708"/>
    </isoform>
</comment>
<comment type="tissue specificity">
    <molecule>Isoform 1</molecule>
    <text evidence="5">Ubiquitously expressed.</text>
</comment>
<comment type="tissue specificity">
    <molecule>Isoform 3</molecule>
    <text evidence="5">Ubiquitously expressed.</text>
</comment>
<comment type="miscellaneous">
    <molecule>Isoform 3</molecule>
    <text evidence="5">Based on a naturally occurring readthrough transcript which produces an NME1-NME2 fusion protein.</text>
</comment>
<comment type="similarity">
    <text evidence="14">Belongs to the NDK family.</text>
</comment>
<protein>
    <recommendedName>
        <fullName>Nucleoside diphosphate kinase B</fullName>
        <shortName>NDK B</shortName>
        <shortName>NDP kinase B</shortName>
        <ecNumber evidence="7 10">2.7.4.6</ecNumber>
    </recommendedName>
    <alternativeName>
        <fullName>C-myc purine-binding transcription factor PUF</fullName>
    </alternativeName>
    <alternativeName>
        <fullName>Histidine protein kinase NDKB</fullName>
        <ecNumber evidence="9">2.7.13.3</ecNumber>
    </alternativeName>
    <alternativeName>
        <fullName>nm23-H2</fullName>
    </alternativeName>
</protein>
<accession>P22392</accession>
<accession>A8MWA3</accession>
<accession>Q1WM23</accession>
<accession>Q6LCT6</accession>
<reference key="1">
    <citation type="journal article" date="1991" name="Cancer Res.">
        <title>Identification of a second human nm23 gene, nm23-H2.</title>
        <authorList>
            <person name="Stahl J.A."/>
            <person name="Leone A."/>
            <person name="Rosengard A.M."/>
            <person name="Porter L."/>
            <person name="Liotta L.A."/>
            <person name="Steeg P.S."/>
            <person name="King C.R."/>
        </authorList>
    </citation>
    <scope>NUCLEOTIDE SEQUENCE [MRNA] (ISOFORM 1)</scope>
</reference>
<reference key="2">
    <citation type="journal article" date="1991" name="J. Biol. Chem.">
        <title>Nucleoside diphosphate kinase from human erythrocytes. Structural characterization of the two polypeptide chains responsible for heterogeneity of the hexameric enzyme.</title>
        <authorList>
            <person name="Gilles A.-M."/>
            <person name="Presecan E."/>
            <person name="Vonica A."/>
            <person name="Lascu I."/>
        </authorList>
    </citation>
    <scope>PROTEIN SEQUENCE (ISOFORM 1)</scope>
    <scope>CATALYTIC ACTIVITY</scope>
    <scope>SUBUNIT</scope>
    <scope>ACTIVE SITE</scope>
</reference>
<reference key="3">
    <citation type="journal article" date="1993" name="Science">
        <title>Human c-myc transcription factor PuF identified as nm23-H2 nucleoside diphosphate kinase, a candidate suppressor of tumor metastasis.</title>
        <authorList>
            <person name="Postel E.H."/>
            <person name="Berberich S.J."/>
            <person name="Flint S.J."/>
            <person name="Ferrone C.A."/>
        </authorList>
    </citation>
    <scope>NUCLEOTIDE SEQUENCE [MRNA] (ISOFORM 1)</scope>
</reference>
<reference key="4">
    <citation type="journal article" date="2006" name="Genomics">
        <title>Read-through transcript from NM23-H1 into the neighboring NM23-H2 gene encodes a novel protein, NM23-LV.</title>
        <authorList>
            <person name="Valentijn L.J."/>
            <person name="Koster J."/>
            <person name="Versteeg R."/>
        </authorList>
    </citation>
    <scope>NUCLEOTIDE SEQUENCE [MRNA] (ISOFORM 3)</scope>
    <scope>SUBCELLULAR LOCATION</scope>
    <scope>TISSUE SPECIFICITY</scope>
    <source>
        <tissue>Neuroblastoma</tissue>
    </source>
</reference>
<reference key="5">
    <citation type="journal article" date="2006" name="Nature">
        <title>DNA sequence of human chromosome 17 and analysis of rearrangement in the human lineage.</title>
        <authorList>
            <person name="Zody M.C."/>
            <person name="Garber M."/>
            <person name="Adams D.J."/>
            <person name="Sharpe T."/>
            <person name="Harrow J."/>
            <person name="Lupski J.R."/>
            <person name="Nicholson C."/>
            <person name="Searle S.M."/>
            <person name="Wilming L."/>
            <person name="Young S.K."/>
            <person name="Abouelleil A."/>
            <person name="Allen N.R."/>
            <person name="Bi W."/>
            <person name="Bloom T."/>
            <person name="Borowsky M.L."/>
            <person name="Bugalter B.E."/>
            <person name="Butler J."/>
            <person name="Chang J.L."/>
            <person name="Chen C.-K."/>
            <person name="Cook A."/>
            <person name="Corum B."/>
            <person name="Cuomo C.A."/>
            <person name="de Jong P.J."/>
            <person name="DeCaprio D."/>
            <person name="Dewar K."/>
            <person name="FitzGerald M."/>
            <person name="Gilbert J."/>
            <person name="Gibson R."/>
            <person name="Gnerre S."/>
            <person name="Goldstein S."/>
            <person name="Grafham D.V."/>
            <person name="Grocock R."/>
            <person name="Hafez N."/>
            <person name="Hagopian D.S."/>
            <person name="Hart E."/>
            <person name="Norman C.H."/>
            <person name="Humphray S."/>
            <person name="Jaffe D.B."/>
            <person name="Jones M."/>
            <person name="Kamal M."/>
            <person name="Khodiyar V.K."/>
            <person name="LaButti K."/>
            <person name="Laird G."/>
            <person name="Lehoczky J."/>
            <person name="Liu X."/>
            <person name="Lokyitsang T."/>
            <person name="Loveland J."/>
            <person name="Lui A."/>
            <person name="Macdonald P."/>
            <person name="Major J.E."/>
            <person name="Matthews L."/>
            <person name="Mauceli E."/>
            <person name="McCarroll S.A."/>
            <person name="Mihalev A.H."/>
            <person name="Mudge J."/>
            <person name="Nguyen C."/>
            <person name="Nicol R."/>
            <person name="O'Leary S.B."/>
            <person name="Osoegawa K."/>
            <person name="Schwartz D.C."/>
            <person name="Shaw-Smith C."/>
            <person name="Stankiewicz P."/>
            <person name="Steward C."/>
            <person name="Swarbreck D."/>
            <person name="Venkataraman V."/>
            <person name="Whittaker C.A."/>
            <person name="Yang X."/>
            <person name="Zimmer A.R."/>
            <person name="Bradley A."/>
            <person name="Hubbard T."/>
            <person name="Birren B.W."/>
            <person name="Rogers J."/>
            <person name="Lander E.S."/>
            <person name="Nusbaum C."/>
        </authorList>
    </citation>
    <scope>NUCLEOTIDE SEQUENCE [LARGE SCALE GENOMIC DNA]</scope>
</reference>
<reference key="6">
    <citation type="journal article" date="2004" name="Genome Res.">
        <title>The status, quality, and expansion of the NIH full-length cDNA project: the Mammalian Gene Collection (MGC).</title>
        <authorList>
            <consortium name="The MGC Project Team"/>
        </authorList>
    </citation>
    <scope>NUCLEOTIDE SEQUENCE [LARGE SCALE MRNA] (ISOFORMS 1 AND 3)</scope>
    <source>
        <tissue>Eye</tissue>
    </source>
</reference>
<reference key="7">
    <citation type="journal article" date="1995" name="Biochem. Biophys. Res. Commun.">
        <title>Characterization of the human nm23-H2 promoter region and localization of the microsatellite D17S396.</title>
        <authorList>
            <person name="Seifert M."/>
            <person name="Seib T."/>
            <person name="Engel M."/>
            <person name="Dooley S."/>
            <person name="Welter C."/>
        </authorList>
    </citation>
    <scope>NUCLEOTIDE SEQUENCE [GENOMIC DNA] OF 1-18</scope>
</reference>
<reference key="8">
    <citation type="journal article" date="2002" name="J. Biol. Chem.">
        <title>Integrin cytoplasmic domain-associated protein 1alpha (ICAP-1alpha) interacts directly with the metastasis suppressor nm23-H2, and both proteins are targeted to newly formed cell adhesion sites upon integrin engagement.</title>
        <authorList>
            <person name="Fournier H.N."/>
            <person name="Dupe-Manet S."/>
            <person name="Bouvard D."/>
            <person name="Lacombe M.L."/>
            <person name="Marie C."/>
            <person name="Block M.R."/>
            <person name="Albiges-Rizo C."/>
        </authorList>
    </citation>
    <scope>INTERACTION WITH ITGB1BP1</scope>
    <scope>SUBCELLULAR LOCATION</scope>
</reference>
<reference key="9">
    <citation type="journal article" date="2004" name="Biochem. Biophys. Res. Commun.">
        <title>Lbc proto-oncogene product binds to and could be negatively regulated by metastasis suppressor nm23-H2.</title>
        <authorList>
            <person name="Iwashita S."/>
            <person name="Fujii M."/>
            <person name="Mukai H."/>
            <person name="Ono Y."/>
            <person name="Miyamoto M."/>
        </authorList>
    </citation>
    <scope>FUNCTION</scope>
    <scope>INTERACTION WITH AKAP13</scope>
</reference>
<reference key="10">
    <citation type="journal article" date="2007" name="Biochem. Biophys. Res. Commun.">
        <title>NM23-H2 involves in negative regulation of Diva and Bcl2L10 in apoptosis signaling.</title>
        <authorList>
            <person name="Kang Y."/>
            <person name="Lee D.C."/>
            <person name="Han J."/>
            <person name="Yoon S."/>
            <person name="Won M."/>
            <person name="Yeom J.H."/>
            <person name="Seong M.J."/>
            <person name="Ko J.J."/>
            <person name="Lee K.A."/>
            <person name="Lee K."/>
            <person name="Bae J."/>
        </authorList>
    </citation>
    <scope>INTERACTION WITH BCL2L10</scope>
    <scope>SUBCELLULAR LOCATION</scope>
</reference>
<reference key="11">
    <citation type="journal article" date="2010" name="Methods Enzymol.">
        <title>Reversible histidine phosphorylation in mammalian cells: a teeter-totter formed by nucleoside diphosphate kinase and protein histidine phosphatase 1.</title>
        <authorList>
            <person name="Wieland T."/>
            <person name="Hippe H.J."/>
            <person name="Ludwig K."/>
            <person name="Zhou X.B."/>
            <person name="Korth M."/>
            <person name="Klumpp S."/>
        </authorList>
    </citation>
    <scope>FUNCTION AS HISTIDINE PROTEIN KINASE</scope>
</reference>
<reference key="12">
    <citation type="journal article" date="2015" name="Biochemistry">
        <title>The maize (Zea mays L.) nucleoside diphosphate kinase1 (ZmNDPK1) gene encodes a human NM23-H2 homologue that binds and stabilizes G-quadruplex DNA.</title>
        <authorList>
            <person name="Kopylov M."/>
            <person name="Bass H.W."/>
            <person name="Stroupe M.E."/>
        </authorList>
    </citation>
    <scope>FUNCTION</scope>
    <scope>CATALYTIC ACTIVITY</scope>
</reference>
<reference key="13">
    <citation type="journal article" date="1995" name="J. Mol. Biol.">
        <title>The crystal structure of a human nucleoside diphosphate kinase, NM23-H2.</title>
        <authorList>
            <person name="Webb P.A."/>
            <person name="Perisic O."/>
            <person name="Mendola C.E."/>
            <person name="Backer J.M."/>
            <person name="Williams R.L."/>
        </authorList>
    </citation>
    <scope>X-RAY CRYSTALLOGRAPHY (2.8 ANGSTROMS)</scope>
</reference>
<reference key="14">
    <citation type="journal article" date="1995" name="Structure">
        <title>X-ray structure of human nucleoside diphosphate kinase B complexed with GDP at 2-A resolution.</title>
        <authorList>
            <person name="Morera S."/>
            <person name="Lacombe M.-L."/>
            <person name="Xu Y."/>
            <person name="Lebras G."/>
            <person name="Janin J."/>
        </authorList>
    </citation>
    <scope>X-RAY CRYSTALLOGRAPHY (2 ANGSTROMS)</scope>
</reference>
<reference evidence="15 16 17" key="15">
    <citation type="journal article" date="2009" name="Mol. Cancer Ther.">
        <title>NM23-H2 may play an indirect role in transcriptional activation of c-myc gene expression but does not cleave the nuclease hypersensitive element III(1).</title>
        <authorList>
            <person name="Dexheimer T.S."/>
            <person name="Carey S.S."/>
            <person name="Zuohe S."/>
            <person name="Gokhale V.M."/>
            <person name="Hu X."/>
            <person name="Murata L.B."/>
            <person name="Maes E.M."/>
            <person name="Weichsel A."/>
            <person name="Sun D."/>
            <person name="Meuillet E.J."/>
            <person name="Montfort W.R."/>
            <person name="Hurley L.H."/>
        </authorList>
    </citation>
    <scope>X-RAY CRYSTALLOGRAPHY (1.30 ANGSTROMS) OF 2-152 IN COMPLEX WITH GDP AND DINUCLEOTIDE AND OF 2-152 OF MUTANT ALA-88</scope>
    <scope>FUNCTION</scope>
    <scope>COFACTOR</scope>
    <scope>MUTAGENESIS OF ARG-88</scope>
</reference>